<name>CLPS_SHEB8</name>
<sequence>MAKIGNIEHVEERVESELMPPSMYKVVLNNDDYTPMDFVIEVLQVFFRKNEQEATDIMLTIHHQGKGICGIFPFGIAETKVIQVNQFARQNQHPLLCSLEKA</sequence>
<comment type="function">
    <text evidence="1">Involved in the modulation of the specificity of the ClpAP-mediated ATP-dependent protein degradation.</text>
</comment>
<comment type="subunit">
    <text evidence="1">Binds to the N-terminal domain of the chaperone ClpA.</text>
</comment>
<comment type="similarity">
    <text evidence="1">Belongs to the ClpS family.</text>
</comment>
<feature type="chain" id="PRO_1000022624" description="ATP-dependent Clp protease adapter protein ClpS">
    <location>
        <begin position="1"/>
        <end position="102"/>
    </location>
</feature>
<protein>
    <recommendedName>
        <fullName evidence="1">ATP-dependent Clp protease adapter protein ClpS</fullName>
    </recommendedName>
</protein>
<gene>
    <name evidence="1" type="primary">clpS</name>
    <name type="ordered locus">Shew185_2466</name>
</gene>
<proteinExistence type="inferred from homology"/>
<evidence type="ECO:0000255" key="1">
    <source>
        <dbReference type="HAMAP-Rule" id="MF_00302"/>
    </source>
</evidence>
<reference key="1">
    <citation type="submission" date="2007-07" db="EMBL/GenBank/DDBJ databases">
        <title>Complete sequence of chromosome of Shewanella baltica OS185.</title>
        <authorList>
            <consortium name="US DOE Joint Genome Institute"/>
            <person name="Copeland A."/>
            <person name="Lucas S."/>
            <person name="Lapidus A."/>
            <person name="Barry K."/>
            <person name="Glavina del Rio T."/>
            <person name="Dalin E."/>
            <person name="Tice H."/>
            <person name="Pitluck S."/>
            <person name="Sims D."/>
            <person name="Brettin T."/>
            <person name="Bruce D."/>
            <person name="Detter J.C."/>
            <person name="Han C."/>
            <person name="Schmutz J."/>
            <person name="Larimer F."/>
            <person name="Land M."/>
            <person name="Hauser L."/>
            <person name="Kyrpides N."/>
            <person name="Mikhailova N."/>
            <person name="Brettar I."/>
            <person name="Rodrigues J."/>
            <person name="Konstantinidis K."/>
            <person name="Tiedje J."/>
            <person name="Richardson P."/>
        </authorList>
    </citation>
    <scope>NUCLEOTIDE SEQUENCE [LARGE SCALE GENOMIC DNA]</scope>
    <source>
        <strain>OS185</strain>
    </source>
</reference>
<accession>A6WP64</accession>
<organism>
    <name type="scientific">Shewanella baltica (strain OS185)</name>
    <dbReference type="NCBI Taxonomy" id="402882"/>
    <lineage>
        <taxon>Bacteria</taxon>
        <taxon>Pseudomonadati</taxon>
        <taxon>Pseudomonadota</taxon>
        <taxon>Gammaproteobacteria</taxon>
        <taxon>Alteromonadales</taxon>
        <taxon>Shewanellaceae</taxon>
        <taxon>Shewanella</taxon>
    </lineage>
</organism>
<dbReference type="EMBL" id="CP000753">
    <property type="protein sequence ID" value="ABS08603.1"/>
    <property type="molecule type" value="Genomic_DNA"/>
</dbReference>
<dbReference type="RefSeq" id="WP_006081936.1">
    <property type="nucleotide sequence ID" value="NC_009665.1"/>
</dbReference>
<dbReference type="SMR" id="A6WP64"/>
<dbReference type="GeneID" id="11772683"/>
<dbReference type="KEGG" id="sbm:Shew185_2466"/>
<dbReference type="HOGENOM" id="CLU_134358_2_1_6"/>
<dbReference type="GO" id="GO:0030163">
    <property type="term" value="P:protein catabolic process"/>
    <property type="evidence" value="ECO:0007669"/>
    <property type="project" value="InterPro"/>
</dbReference>
<dbReference type="GO" id="GO:0006508">
    <property type="term" value="P:proteolysis"/>
    <property type="evidence" value="ECO:0007669"/>
    <property type="project" value="UniProtKB-UniRule"/>
</dbReference>
<dbReference type="FunFam" id="3.30.1390.10:FF:000002">
    <property type="entry name" value="ATP-dependent Clp protease adapter protein ClpS"/>
    <property type="match status" value="1"/>
</dbReference>
<dbReference type="Gene3D" id="3.30.1390.10">
    <property type="match status" value="1"/>
</dbReference>
<dbReference type="HAMAP" id="MF_00302">
    <property type="entry name" value="ClpS"/>
    <property type="match status" value="1"/>
</dbReference>
<dbReference type="InterPro" id="IPR022935">
    <property type="entry name" value="ClpS"/>
</dbReference>
<dbReference type="InterPro" id="IPR003769">
    <property type="entry name" value="ClpS_core"/>
</dbReference>
<dbReference type="InterPro" id="IPR014719">
    <property type="entry name" value="Ribosomal_bL12_C/ClpS-like"/>
</dbReference>
<dbReference type="NCBIfam" id="NF000670">
    <property type="entry name" value="PRK00033.1-3"/>
    <property type="match status" value="1"/>
</dbReference>
<dbReference type="NCBIfam" id="NF000672">
    <property type="entry name" value="PRK00033.1-5"/>
    <property type="match status" value="1"/>
</dbReference>
<dbReference type="PANTHER" id="PTHR33473:SF19">
    <property type="entry name" value="ATP-DEPENDENT CLP PROTEASE ADAPTER PROTEIN CLPS"/>
    <property type="match status" value="1"/>
</dbReference>
<dbReference type="PANTHER" id="PTHR33473">
    <property type="entry name" value="ATP-DEPENDENT CLP PROTEASE ADAPTER PROTEIN CLPS1, CHLOROPLASTIC"/>
    <property type="match status" value="1"/>
</dbReference>
<dbReference type="Pfam" id="PF02617">
    <property type="entry name" value="ClpS"/>
    <property type="match status" value="1"/>
</dbReference>
<dbReference type="SUPFAM" id="SSF54736">
    <property type="entry name" value="ClpS-like"/>
    <property type="match status" value="1"/>
</dbReference>